<dbReference type="EMBL" id="CP000766">
    <property type="protein sequence ID" value="ABY72105.1"/>
    <property type="molecule type" value="Genomic_DNA"/>
</dbReference>
<dbReference type="RefSeq" id="WP_012150370.1">
    <property type="nucleotide sequence ID" value="NC_010263.3"/>
</dbReference>
<dbReference type="SMR" id="B0BW79"/>
<dbReference type="GeneID" id="79936945"/>
<dbReference type="KEGG" id="rrj:RrIowa_0192"/>
<dbReference type="eggNOG" id="COG0335">
    <property type="taxonomic scope" value="Bacteria"/>
</dbReference>
<dbReference type="HOGENOM" id="CLU_103507_1_0_5"/>
<dbReference type="Proteomes" id="UP000000796">
    <property type="component" value="Chromosome"/>
</dbReference>
<dbReference type="GO" id="GO:0022625">
    <property type="term" value="C:cytosolic large ribosomal subunit"/>
    <property type="evidence" value="ECO:0007669"/>
    <property type="project" value="TreeGrafter"/>
</dbReference>
<dbReference type="GO" id="GO:0003735">
    <property type="term" value="F:structural constituent of ribosome"/>
    <property type="evidence" value="ECO:0007669"/>
    <property type="project" value="InterPro"/>
</dbReference>
<dbReference type="GO" id="GO:0006412">
    <property type="term" value="P:translation"/>
    <property type="evidence" value="ECO:0007669"/>
    <property type="project" value="UniProtKB-UniRule"/>
</dbReference>
<dbReference type="Gene3D" id="2.30.30.790">
    <property type="match status" value="1"/>
</dbReference>
<dbReference type="HAMAP" id="MF_00402">
    <property type="entry name" value="Ribosomal_bL19"/>
    <property type="match status" value="1"/>
</dbReference>
<dbReference type="InterPro" id="IPR001857">
    <property type="entry name" value="Ribosomal_bL19"/>
</dbReference>
<dbReference type="InterPro" id="IPR018257">
    <property type="entry name" value="Ribosomal_bL19_CS"/>
</dbReference>
<dbReference type="InterPro" id="IPR038657">
    <property type="entry name" value="Ribosomal_bL19_sf"/>
</dbReference>
<dbReference type="InterPro" id="IPR008991">
    <property type="entry name" value="Translation_prot_SH3-like_sf"/>
</dbReference>
<dbReference type="NCBIfam" id="TIGR01024">
    <property type="entry name" value="rplS_bact"/>
    <property type="match status" value="1"/>
</dbReference>
<dbReference type="PANTHER" id="PTHR15680:SF9">
    <property type="entry name" value="LARGE RIBOSOMAL SUBUNIT PROTEIN BL19M"/>
    <property type="match status" value="1"/>
</dbReference>
<dbReference type="PANTHER" id="PTHR15680">
    <property type="entry name" value="RIBOSOMAL PROTEIN L19"/>
    <property type="match status" value="1"/>
</dbReference>
<dbReference type="Pfam" id="PF01245">
    <property type="entry name" value="Ribosomal_L19"/>
    <property type="match status" value="1"/>
</dbReference>
<dbReference type="PIRSF" id="PIRSF002191">
    <property type="entry name" value="Ribosomal_L19"/>
    <property type="match status" value="1"/>
</dbReference>
<dbReference type="PRINTS" id="PR00061">
    <property type="entry name" value="RIBOSOMALL19"/>
</dbReference>
<dbReference type="SUPFAM" id="SSF50104">
    <property type="entry name" value="Translation proteins SH3-like domain"/>
    <property type="match status" value="1"/>
</dbReference>
<dbReference type="PROSITE" id="PS01015">
    <property type="entry name" value="RIBOSOMAL_L19"/>
    <property type="match status" value="1"/>
</dbReference>
<protein>
    <recommendedName>
        <fullName evidence="1">Large ribosomal subunit protein bL19</fullName>
    </recommendedName>
    <alternativeName>
        <fullName evidence="2">50S ribosomal protein L19</fullName>
    </alternativeName>
</protein>
<accession>B0BW79</accession>
<name>RL19_RICRO</name>
<sequence length="138" mass="15849">MNIIDRFEQENISKRTANKKIPDFEAGDTVKVTVKIVDRSIEKDGKEKLTERFQAYEGVVIAKRNRGITSSFLVRKISHGEGVERRFMTYSPIVHSIDVVKYGVVRRAKLYYLRNRSGKSARIKERHIPIAKTKAAKA</sequence>
<reference key="1">
    <citation type="journal article" date="2008" name="Infect. Immun.">
        <title>Genomic comparison of virulent Rickettsia rickettsii Sheila Smith and avirulent Rickettsia rickettsii Iowa.</title>
        <authorList>
            <person name="Ellison D.W."/>
            <person name="Clark T.R."/>
            <person name="Sturdevant D.E."/>
            <person name="Virtaneva K."/>
            <person name="Porcella S.F."/>
            <person name="Hackstadt T."/>
        </authorList>
    </citation>
    <scope>NUCLEOTIDE SEQUENCE [LARGE SCALE GENOMIC DNA]</scope>
    <source>
        <strain>Iowa</strain>
    </source>
</reference>
<proteinExistence type="inferred from homology"/>
<gene>
    <name evidence="1" type="primary">rplS</name>
    <name type="ordered locus">RrIowa_0192</name>
</gene>
<keyword id="KW-0687">Ribonucleoprotein</keyword>
<keyword id="KW-0689">Ribosomal protein</keyword>
<comment type="function">
    <text evidence="1">This protein is located at the 30S-50S ribosomal subunit interface and may play a role in the structure and function of the aminoacyl-tRNA binding site.</text>
</comment>
<comment type="similarity">
    <text evidence="1">Belongs to the bacterial ribosomal protein bL19 family.</text>
</comment>
<evidence type="ECO:0000255" key="1">
    <source>
        <dbReference type="HAMAP-Rule" id="MF_00402"/>
    </source>
</evidence>
<evidence type="ECO:0000305" key="2"/>
<organism>
    <name type="scientific">Rickettsia rickettsii (strain Iowa)</name>
    <dbReference type="NCBI Taxonomy" id="452659"/>
    <lineage>
        <taxon>Bacteria</taxon>
        <taxon>Pseudomonadati</taxon>
        <taxon>Pseudomonadota</taxon>
        <taxon>Alphaproteobacteria</taxon>
        <taxon>Rickettsiales</taxon>
        <taxon>Rickettsiaceae</taxon>
        <taxon>Rickettsieae</taxon>
        <taxon>Rickettsia</taxon>
        <taxon>spotted fever group</taxon>
    </lineage>
</organism>
<feature type="chain" id="PRO_1000080365" description="Large ribosomal subunit protein bL19">
    <location>
        <begin position="1"/>
        <end position="138"/>
    </location>
</feature>